<comment type="function">
    <text evidence="1">ATP-dependent specificity component of the Clp protease. It directs the protease to specific substrates. Can perform chaperone functions in the absence of ClpP.</text>
</comment>
<comment type="subunit">
    <text evidence="1">Component of the ClpX-ClpP complex. Forms a hexameric ring that, in the presence of ATP, binds to fourteen ClpP subunits assembled into a disk-like structure with a central cavity, resembling the structure of eukaryotic proteasomes.</text>
</comment>
<comment type="similarity">
    <text evidence="1">Belongs to the ClpX chaperone family.</text>
</comment>
<gene>
    <name evidence="1" type="primary">clpX</name>
    <name type="ordered locus">BCG_2477c</name>
</gene>
<proteinExistence type="inferred from homology"/>
<feature type="chain" id="PRO_1000024587" description="ATP-dependent Clp protease ATP-binding subunit ClpX">
    <location>
        <begin position="1"/>
        <end position="426"/>
    </location>
</feature>
<feature type="domain" description="ClpX-type ZB" evidence="2">
    <location>
        <begin position="1"/>
        <end position="54"/>
    </location>
</feature>
<feature type="binding site" evidence="2">
    <location>
        <position position="13"/>
    </location>
    <ligand>
        <name>Zn(2+)</name>
        <dbReference type="ChEBI" id="CHEBI:29105"/>
    </ligand>
</feature>
<feature type="binding site" evidence="2">
    <location>
        <position position="16"/>
    </location>
    <ligand>
        <name>Zn(2+)</name>
        <dbReference type="ChEBI" id="CHEBI:29105"/>
    </ligand>
</feature>
<feature type="binding site" evidence="2">
    <location>
        <position position="35"/>
    </location>
    <ligand>
        <name>Zn(2+)</name>
        <dbReference type="ChEBI" id="CHEBI:29105"/>
    </ligand>
</feature>
<feature type="binding site" evidence="2">
    <location>
        <position position="38"/>
    </location>
    <ligand>
        <name>Zn(2+)</name>
        <dbReference type="ChEBI" id="CHEBI:29105"/>
    </ligand>
</feature>
<feature type="binding site" evidence="1">
    <location>
        <begin position="122"/>
        <end position="129"/>
    </location>
    <ligand>
        <name>ATP</name>
        <dbReference type="ChEBI" id="CHEBI:30616"/>
    </ligand>
</feature>
<evidence type="ECO:0000255" key="1">
    <source>
        <dbReference type="HAMAP-Rule" id="MF_00175"/>
    </source>
</evidence>
<evidence type="ECO:0000255" key="2">
    <source>
        <dbReference type="PROSITE-ProRule" id="PRU01250"/>
    </source>
</evidence>
<accession>A1KLF3</accession>
<sequence length="426" mass="46797">MARIGDGGDLLKCSFCGKSQKQVKKLIAGPGVYICDECIDLCNEIIEEELADADDVKLDELPKPAEIREFLEGYVIGQDTAKRTLAVAVYNHYKRIQAGEKGRDSRCEPVELTKSNILMLGPTGCGKTYLAQTLAKMLNVPFAIADATALTEAGYVGEDVENILLKLIQAADYDVKRAETGIIYIDEVDKIARKSENPSITRDVSGEGVQQALLKILEGTQASVPPQGARKHPHQEFIQIDTTNVLFIVAGAFAGLEKIIYERVGKRGLGFGAEVRSKAEIDTTDHFADVMPEDLIKFGLIPEFIGRLPVVASVTNLDKESLVKILSEPKNALVKQYIRLFEMDGVELEFTDDALEAIADQAIHRGTGARGLRAIMEEVLLPVMYDIPSRDDVAKVVVTKETVQDNVLPTIVPRKPSRSERRDKSA</sequence>
<protein>
    <recommendedName>
        <fullName evidence="1">ATP-dependent Clp protease ATP-binding subunit ClpX</fullName>
    </recommendedName>
</protein>
<organism>
    <name type="scientific">Mycobacterium bovis (strain BCG / Pasteur 1173P2)</name>
    <dbReference type="NCBI Taxonomy" id="410289"/>
    <lineage>
        <taxon>Bacteria</taxon>
        <taxon>Bacillati</taxon>
        <taxon>Actinomycetota</taxon>
        <taxon>Actinomycetes</taxon>
        <taxon>Mycobacteriales</taxon>
        <taxon>Mycobacteriaceae</taxon>
        <taxon>Mycobacterium</taxon>
        <taxon>Mycobacterium tuberculosis complex</taxon>
    </lineage>
</organism>
<dbReference type="EMBL" id="AM408590">
    <property type="protein sequence ID" value="CAL72465.1"/>
    <property type="molecule type" value="Genomic_DNA"/>
</dbReference>
<dbReference type="RefSeq" id="WP_011799265.1">
    <property type="nucleotide sequence ID" value="NC_008769.1"/>
</dbReference>
<dbReference type="SMR" id="A1KLF3"/>
<dbReference type="KEGG" id="mbb:BCG_2477c"/>
<dbReference type="HOGENOM" id="CLU_014218_8_2_11"/>
<dbReference type="Proteomes" id="UP000001472">
    <property type="component" value="Chromosome"/>
</dbReference>
<dbReference type="GO" id="GO:0009376">
    <property type="term" value="C:HslUV protease complex"/>
    <property type="evidence" value="ECO:0007669"/>
    <property type="project" value="TreeGrafter"/>
</dbReference>
<dbReference type="GO" id="GO:0005524">
    <property type="term" value="F:ATP binding"/>
    <property type="evidence" value="ECO:0007669"/>
    <property type="project" value="UniProtKB-UniRule"/>
</dbReference>
<dbReference type="GO" id="GO:0016887">
    <property type="term" value="F:ATP hydrolysis activity"/>
    <property type="evidence" value="ECO:0007669"/>
    <property type="project" value="InterPro"/>
</dbReference>
<dbReference type="GO" id="GO:0140662">
    <property type="term" value="F:ATP-dependent protein folding chaperone"/>
    <property type="evidence" value="ECO:0007669"/>
    <property type="project" value="InterPro"/>
</dbReference>
<dbReference type="GO" id="GO:0046983">
    <property type="term" value="F:protein dimerization activity"/>
    <property type="evidence" value="ECO:0007669"/>
    <property type="project" value="InterPro"/>
</dbReference>
<dbReference type="GO" id="GO:0051082">
    <property type="term" value="F:unfolded protein binding"/>
    <property type="evidence" value="ECO:0007669"/>
    <property type="project" value="UniProtKB-UniRule"/>
</dbReference>
<dbReference type="GO" id="GO:0008270">
    <property type="term" value="F:zinc ion binding"/>
    <property type="evidence" value="ECO:0007669"/>
    <property type="project" value="InterPro"/>
</dbReference>
<dbReference type="GO" id="GO:0051301">
    <property type="term" value="P:cell division"/>
    <property type="evidence" value="ECO:0007669"/>
    <property type="project" value="TreeGrafter"/>
</dbReference>
<dbReference type="GO" id="GO:0051603">
    <property type="term" value="P:proteolysis involved in protein catabolic process"/>
    <property type="evidence" value="ECO:0007669"/>
    <property type="project" value="TreeGrafter"/>
</dbReference>
<dbReference type="CDD" id="cd19497">
    <property type="entry name" value="RecA-like_ClpX"/>
    <property type="match status" value="1"/>
</dbReference>
<dbReference type="FunFam" id="1.10.8.60:FF:000002">
    <property type="entry name" value="ATP-dependent Clp protease ATP-binding subunit ClpX"/>
    <property type="match status" value="1"/>
</dbReference>
<dbReference type="FunFam" id="3.40.50.300:FF:000005">
    <property type="entry name" value="ATP-dependent Clp protease ATP-binding subunit ClpX"/>
    <property type="match status" value="1"/>
</dbReference>
<dbReference type="Gene3D" id="1.10.8.60">
    <property type="match status" value="1"/>
</dbReference>
<dbReference type="Gene3D" id="6.20.220.10">
    <property type="entry name" value="ClpX chaperone, C4-type zinc finger domain"/>
    <property type="match status" value="1"/>
</dbReference>
<dbReference type="Gene3D" id="3.40.50.300">
    <property type="entry name" value="P-loop containing nucleotide triphosphate hydrolases"/>
    <property type="match status" value="1"/>
</dbReference>
<dbReference type="HAMAP" id="MF_00175">
    <property type="entry name" value="ClpX"/>
    <property type="match status" value="1"/>
</dbReference>
<dbReference type="InterPro" id="IPR003593">
    <property type="entry name" value="AAA+_ATPase"/>
</dbReference>
<dbReference type="InterPro" id="IPR050052">
    <property type="entry name" value="ATP-dep_Clp_protease_ClpX"/>
</dbReference>
<dbReference type="InterPro" id="IPR003959">
    <property type="entry name" value="ATPase_AAA_core"/>
</dbReference>
<dbReference type="InterPro" id="IPR019489">
    <property type="entry name" value="Clp_ATPase_C"/>
</dbReference>
<dbReference type="InterPro" id="IPR004487">
    <property type="entry name" value="Clp_protease_ATP-bd_su_ClpX"/>
</dbReference>
<dbReference type="InterPro" id="IPR046425">
    <property type="entry name" value="ClpX_bact"/>
</dbReference>
<dbReference type="InterPro" id="IPR027417">
    <property type="entry name" value="P-loop_NTPase"/>
</dbReference>
<dbReference type="InterPro" id="IPR010603">
    <property type="entry name" value="Znf_CppX_C4"/>
</dbReference>
<dbReference type="InterPro" id="IPR038366">
    <property type="entry name" value="Znf_CppX_C4_sf"/>
</dbReference>
<dbReference type="NCBIfam" id="TIGR00382">
    <property type="entry name" value="clpX"/>
    <property type="match status" value="1"/>
</dbReference>
<dbReference type="NCBIfam" id="NF003745">
    <property type="entry name" value="PRK05342.1"/>
    <property type="match status" value="1"/>
</dbReference>
<dbReference type="PANTHER" id="PTHR48102:SF7">
    <property type="entry name" value="ATP-DEPENDENT CLP PROTEASE ATP-BINDING SUBUNIT CLPX-LIKE, MITOCHONDRIAL"/>
    <property type="match status" value="1"/>
</dbReference>
<dbReference type="PANTHER" id="PTHR48102">
    <property type="entry name" value="ATP-DEPENDENT CLP PROTEASE ATP-BINDING SUBUNIT CLPX-LIKE, MITOCHONDRIAL-RELATED"/>
    <property type="match status" value="1"/>
</dbReference>
<dbReference type="Pfam" id="PF07724">
    <property type="entry name" value="AAA_2"/>
    <property type="match status" value="1"/>
</dbReference>
<dbReference type="Pfam" id="PF10431">
    <property type="entry name" value="ClpB_D2-small"/>
    <property type="match status" value="1"/>
</dbReference>
<dbReference type="Pfam" id="PF06689">
    <property type="entry name" value="zf-C4_ClpX"/>
    <property type="match status" value="1"/>
</dbReference>
<dbReference type="SMART" id="SM00382">
    <property type="entry name" value="AAA"/>
    <property type="match status" value="1"/>
</dbReference>
<dbReference type="SMART" id="SM01086">
    <property type="entry name" value="ClpB_D2-small"/>
    <property type="match status" value="1"/>
</dbReference>
<dbReference type="SMART" id="SM00994">
    <property type="entry name" value="zf-C4_ClpX"/>
    <property type="match status" value="1"/>
</dbReference>
<dbReference type="SUPFAM" id="SSF57716">
    <property type="entry name" value="Glucocorticoid receptor-like (DNA-binding domain)"/>
    <property type="match status" value="1"/>
</dbReference>
<dbReference type="SUPFAM" id="SSF52540">
    <property type="entry name" value="P-loop containing nucleoside triphosphate hydrolases"/>
    <property type="match status" value="1"/>
</dbReference>
<dbReference type="PROSITE" id="PS51902">
    <property type="entry name" value="CLPX_ZB"/>
    <property type="match status" value="1"/>
</dbReference>
<keyword id="KW-0067">ATP-binding</keyword>
<keyword id="KW-0143">Chaperone</keyword>
<keyword id="KW-0479">Metal-binding</keyword>
<keyword id="KW-0547">Nucleotide-binding</keyword>
<keyword id="KW-0862">Zinc</keyword>
<name>CLPX_MYCBP</name>
<reference key="1">
    <citation type="journal article" date="2007" name="Proc. Natl. Acad. Sci. U.S.A.">
        <title>Genome plasticity of BCG and impact on vaccine efficacy.</title>
        <authorList>
            <person name="Brosch R."/>
            <person name="Gordon S.V."/>
            <person name="Garnier T."/>
            <person name="Eiglmeier K."/>
            <person name="Frigui W."/>
            <person name="Valenti P."/>
            <person name="Dos Santos S."/>
            <person name="Duthoy S."/>
            <person name="Lacroix C."/>
            <person name="Garcia-Pelayo C."/>
            <person name="Inwald J.K."/>
            <person name="Golby P."/>
            <person name="Garcia J.N."/>
            <person name="Hewinson R.G."/>
            <person name="Behr M.A."/>
            <person name="Quail M.A."/>
            <person name="Churcher C."/>
            <person name="Barrell B.G."/>
            <person name="Parkhill J."/>
            <person name="Cole S.T."/>
        </authorList>
    </citation>
    <scope>NUCLEOTIDE SEQUENCE [LARGE SCALE GENOMIC DNA]</scope>
    <source>
        <strain>BCG / Pasteur 1173P2</strain>
    </source>
</reference>